<reference key="1">
    <citation type="journal article" date="1997" name="J. Bacteriol.">
        <title>Complete genome sequence of Methanobacterium thermoautotrophicum deltaH: functional analysis and comparative genomics.</title>
        <authorList>
            <person name="Smith D.R."/>
            <person name="Doucette-Stamm L.A."/>
            <person name="Deloughery C."/>
            <person name="Lee H.-M."/>
            <person name="Dubois J."/>
            <person name="Aldredge T."/>
            <person name="Bashirzadeh R."/>
            <person name="Blakely D."/>
            <person name="Cook R."/>
            <person name="Gilbert K."/>
            <person name="Harrison D."/>
            <person name="Hoang L."/>
            <person name="Keagle P."/>
            <person name="Lumm W."/>
            <person name="Pothier B."/>
            <person name="Qiu D."/>
            <person name="Spadafora R."/>
            <person name="Vicare R."/>
            <person name="Wang Y."/>
            <person name="Wierzbowski J."/>
            <person name="Gibson R."/>
            <person name="Jiwani N."/>
            <person name="Caruso A."/>
            <person name="Bush D."/>
            <person name="Safer H."/>
            <person name="Patwell D."/>
            <person name="Prabhakar S."/>
            <person name="McDougall S."/>
            <person name="Shimer G."/>
            <person name="Goyal A."/>
            <person name="Pietrovski S."/>
            <person name="Church G.M."/>
            <person name="Daniels C.J."/>
            <person name="Mao J.-I."/>
            <person name="Rice P."/>
            <person name="Noelling J."/>
            <person name="Reeve J.N."/>
        </authorList>
    </citation>
    <scope>NUCLEOTIDE SEQUENCE [LARGE SCALE GENOMIC DNA]</scope>
    <source>
        <strain>ATCC 29096 / DSM 1053 / JCM 10044 / NBRC 100330 / Delta H</strain>
    </source>
</reference>
<evidence type="ECO:0000305" key="1"/>
<evidence type="ECO:0007829" key="2">
    <source>
        <dbReference type="PDB" id="2PTF"/>
    </source>
</evidence>
<name>Y863_METTH</name>
<organism>
    <name type="scientific">Methanothermobacter thermautotrophicus (strain ATCC 29096 / DSM 1053 / JCM 10044 / NBRC 100330 / Delta H)</name>
    <name type="common">Methanobacterium thermoautotrophicum</name>
    <dbReference type="NCBI Taxonomy" id="187420"/>
    <lineage>
        <taxon>Archaea</taxon>
        <taxon>Methanobacteriati</taxon>
        <taxon>Methanobacteriota</taxon>
        <taxon>Methanomada group</taxon>
        <taxon>Methanobacteria</taxon>
        <taxon>Methanobacteriales</taxon>
        <taxon>Methanobacteriaceae</taxon>
        <taxon>Methanothermobacter</taxon>
    </lineage>
</organism>
<sequence length="223" mass="25174">MSGALKENSGKPSEVEYTHFKDLQALEMERGRLYETIVVTWDDSMVGNAAPIGVLCTGDDTVTLYLYQGTRTVENVLNNGRFTVNVTLDPLIFTDSTLGDLEEDMFSHYRDFLHLRGADAFFTAEVVSVKKLVKRDRFGESELHVVKARAGDVMRAESFRMALNRGIYAVIESLIAYTRAEFSDPLVLRERIAEMNRVARKVGGPREKEAMRRIIQALESKIS</sequence>
<feature type="chain" id="PRO_0000107343" description="Uncharacterized protein MTH_863">
    <location>
        <begin position="1"/>
        <end position="223"/>
    </location>
</feature>
<feature type="strand" evidence="2">
    <location>
        <begin position="18"/>
        <end position="22"/>
    </location>
</feature>
<feature type="helix" evidence="2">
    <location>
        <begin position="23"/>
        <end position="25"/>
    </location>
</feature>
<feature type="strand" evidence="2">
    <location>
        <begin position="33"/>
        <end position="41"/>
    </location>
</feature>
<feature type="strand" evidence="2">
    <location>
        <begin position="47"/>
        <end position="56"/>
    </location>
</feature>
<feature type="strand" evidence="2">
    <location>
        <begin position="58"/>
        <end position="67"/>
    </location>
</feature>
<feature type="helix" evidence="2">
    <location>
        <begin position="71"/>
        <end position="79"/>
    </location>
</feature>
<feature type="strand" evidence="2">
    <location>
        <begin position="80"/>
        <end position="86"/>
    </location>
</feature>
<feature type="helix" evidence="2">
    <location>
        <begin position="90"/>
        <end position="98"/>
    </location>
</feature>
<feature type="helix" evidence="2">
    <location>
        <begin position="103"/>
        <end position="105"/>
    </location>
</feature>
<feature type="strand" evidence="2">
    <location>
        <begin position="106"/>
        <end position="109"/>
    </location>
</feature>
<feature type="strand" evidence="2">
    <location>
        <begin position="112"/>
        <end position="115"/>
    </location>
</feature>
<feature type="strand" evidence="2">
    <location>
        <begin position="119"/>
        <end position="134"/>
    </location>
</feature>
<feature type="strand" evidence="2">
    <location>
        <begin position="141"/>
        <end position="155"/>
    </location>
</feature>
<feature type="helix" evidence="2">
    <location>
        <begin position="166"/>
        <end position="178"/>
    </location>
</feature>
<feature type="helix" evidence="2">
    <location>
        <begin position="186"/>
        <end position="202"/>
    </location>
</feature>
<feature type="helix" evidence="2">
    <location>
        <begin position="205"/>
        <end position="219"/>
    </location>
</feature>
<accession>O26951</accession>
<comment type="similarity">
    <text evidence="1">To M.jannaschii MJ1453.</text>
</comment>
<gene>
    <name type="ordered locus">MTH_863</name>
</gene>
<proteinExistence type="evidence at protein level"/>
<dbReference type="EMBL" id="AE000666">
    <property type="protein sequence ID" value="AAB85361.1"/>
    <property type="molecule type" value="Genomic_DNA"/>
</dbReference>
<dbReference type="PIR" id="C69215">
    <property type="entry name" value="C69215"/>
</dbReference>
<dbReference type="RefSeq" id="WP_010876496.1">
    <property type="nucleotide sequence ID" value="NC_000916.1"/>
</dbReference>
<dbReference type="PDB" id="2PTF">
    <property type="method" value="X-ray"/>
    <property type="resolution" value="2.35 A"/>
    <property type="chains" value="A/B=2-223"/>
</dbReference>
<dbReference type="PDBsum" id="2PTF"/>
<dbReference type="SMR" id="O26951"/>
<dbReference type="STRING" id="187420.MTH_863"/>
<dbReference type="PaxDb" id="187420-MTH_863"/>
<dbReference type="EnsemblBacteria" id="AAB85361">
    <property type="protein sequence ID" value="AAB85361"/>
    <property type="gene ID" value="MTH_863"/>
</dbReference>
<dbReference type="GeneID" id="1471271"/>
<dbReference type="KEGG" id="mth:MTH_863"/>
<dbReference type="HOGENOM" id="CLU_110565_0_0_2"/>
<dbReference type="InParanoid" id="O26951"/>
<dbReference type="EvolutionaryTrace" id="O26951"/>
<dbReference type="Proteomes" id="UP000005223">
    <property type="component" value="Chromosome"/>
</dbReference>
<dbReference type="Gene3D" id="2.30.110.10">
    <property type="entry name" value="Electron Transport, Fmn-binding Protein, Chain A"/>
    <property type="match status" value="1"/>
</dbReference>
<dbReference type="Gene3D" id="1.20.58.290">
    <property type="entry name" value="Hypothetical membrane protein ta0354_69_121"/>
    <property type="match status" value="1"/>
</dbReference>
<dbReference type="InterPro" id="IPR049288">
    <property type="entry name" value="DUF447_C"/>
</dbReference>
<dbReference type="InterPro" id="IPR007386">
    <property type="entry name" value="DUF447_N"/>
</dbReference>
<dbReference type="InterPro" id="IPR012349">
    <property type="entry name" value="Split_barrel_FMN-bd"/>
</dbReference>
<dbReference type="InterPro" id="IPR016733">
    <property type="entry name" value="UCP018747"/>
</dbReference>
<dbReference type="Pfam" id="PF20766">
    <property type="entry name" value="DUF447_C"/>
    <property type="match status" value="1"/>
</dbReference>
<dbReference type="Pfam" id="PF04289">
    <property type="entry name" value="DUF447_N"/>
    <property type="match status" value="1"/>
</dbReference>
<dbReference type="PIRSF" id="PIRSF018747">
    <property type="entry name" value="UCP018747"/>
    <property type="match status" value="1"/>
</dbReference>
<dbReference type="SUPFAM" id="SSF50475">
    <property type="entry name" value="FMN-binding split barrel"/>
    <property type="match status" value="1"/>
</dbReference>
<protein>
    <recommendedName>
        <fullName>Uncharacterized protein MTH_863</fullName>
    </recommendedName>
</protein>
<keyword id="KW-0002">3D-structure</keyword>
<keyword id="KW-1185">Reference proteome</keyword>